<protein>
    <recommendedName>
        <fullName evidence="1">Arginine biosynthesis bifunctional protein ArgJ, mitochondrial</fullName>
    </recommendedName>
    <domain>
        <recommendedName>
            <fullName evidence="1">Glutamate N-acetyltransferase</fullName>
            <shortName evidence="1">GAT</shortName>
            <ecNumber evidence="1">2.3.1.35</ecNumber>
        </recommendedName>
        <alternativeName>
            <fullName evidence="1">Ornithine acetyltransferase</fullName>
            <shortName evidence="1">OATase</shortName>
        </alternativeName>
        <alternativeName>
            <fullName evidence="1">Ornithine transacetylase</fullName>
        </alternativeName>
    </domain>
    <domain>
        <recommendedName>
            <fullName evidence="1">Amino-acid acetyltransferase</fullName>
            <ecNumber evidence="1">2.3.1.1</ecNumber>
        </recommendedName>
        <alternativeName>
            <fullName evidence="1">N-acetylglutamate synthase</fullName>
            <shortName evidence="1">AGS</shortName>
        </alternativeName>
    </domain>
    <component>
        <recommendedName>
            <fullName evidence="1">Arginine biosynthesis bifunctional protein ArgJ alpha chain</fullName>
        </recommendedName>
    </component>
    <component>
        <recommendedName>
            <fullName evidence="1">Arginine biosynthesis bifunctional protein ArgJ beta chain</fullName>
        </recommendedName>
    </component>
</protein>
<proteinExistence type="inferred from homology"/>
<comment type="function">
    <text evidence="1">Catalyzes two activities which are involved in the cyclic version of arginine biosynthesis: the synthesis of acetylglutamate from glutamate and acetyl-CoA, and of ornithine by transacetylation between acetylornithine and glutamate.</text>
</comment>
<comment type="catalytic activity">
    <reaction evidence="1">
        <text>N(2)-acetyl-L-ornithine + L-glutamate = N-acetyl-L-glutamate + L-ornithine</text>
        <dbReference type="Rhea" id="RHEA:15349"/>
        <dbReference type="ChEBI" id="CHEBI:29985"/>
        <dbReference type="ChEBI" id="CHEBI:44337"/>
        <dbReference type="ChEBI" id="CHEBI:46911"/>
        <dbReference type="ChEBI" id="CHEBI:57805"/>
        <dbReference type="EC" id="2.3.1.35"/>
    </reaction>
</comment>
<comment type="catalytic activity">
    <reaction evidence="1">
        <text>L-glutamate + acetyl-CoA = N-acetyl-L-glutamate + CoA + H(+)</text>
        <dbReference type="Rhea" id="RHEA:24292"/>
        <dbReference type="ChEBI" id="CHEBI:15378"/>
        <dbReference type="ChEBI" id="CHEBI:29985"/>
        <dbReference type="ChEBI" id="CHEBI:44337"/>
        <dbReference type="ChEBI" id="CHEBI:57287"/>
        <dbReference type="ChEBI" id="CHEBI:57288"/>
        <dbReference type="EC" id="2.3.1.1"/>
    </reaction>
</comment>
<comment type="pathway">
    <text evidence="1">Amino-acid biosynthesis; L-arginine biosynthesis; L-ornithine and N-acetyl-L-glutamate from L-glutamate and N(2)-acetyl-L-ornithine (cyclic): step 1/1.</text>
</comment>
<comment type="pathway">
    <text evidence="1">Amino-acid biosynthesis; L-arginine biosynthesis; N(2)-acetyl-L-ornithine from L-glutamate: step 1/4.</text>
</comment>
<comment type="subunit">
    <text evidence="1">Heterodimer of an alpha and a beta chain.</text>
</comment>
<comment type="subcellular location">
    <subcellularLocation>
        <location evidence="1">Mitochondrion matrix</location>
    </subcellularLocation>
</comment>
<comment type="PTM">
    <text evidence="1">The alpha and beta chains are autoproteolytically processed from a single precursor protein within the mitochondrion.</text>
</comment>
<comment type="miscellaneous">
    <text evidence="1">This protein may be expected to contain an N-terminal transit peptide but none has been predicted.</text>
</comment>
<comment type="similarity">
    <text evidence="1">Belongs to the ArgJ family.</text>
</comment>
<keyword id="KW-0012">Acyltransferase</keyword>
<keyword id="KW-0028">Amino-acid biosynthesis</keyword>
<keyword id="KW-0055">Arginine biosynthesis</keyword>
<keyword id="KW-0068">Autocatalytic cleavage</keyword>
<keyword id="KW-0496">Mitochondrion</keyword>
<keyword id="KW-0511">Multifunctional enzyme</keyword>
<keyword id="KW-1185">Reference proteome</keyword>
<keyword id="KW-0808">Transferase</keyword>
<sequence length="428" mass="45374">MNNLKLARFFATISKESKYVPNSGSYPLGYKVGAIHCGVKKNSTLDLAVLVSETPASAAAVFTTNKFKAAPVQVSRQILNDKNGKGISSIVVNSGNANAVTGKGGIEDALKMVDTVDSTLKNAPSSTLVMSTGVIGQRLPIDNILKGIPVALKDVGSSHEDWLRCAQGIMTTDTFPKLVSKSFEIDGRKYSLAGLAKGAGMICPNMATLLGFFVTDAPVTPGALSKILTYATDRSFNCISVDGDMSTNDTICAMANGAAGGEEISETSSQFSKIQDEITLFAQQLAQLVVRDGEGATKFITINVQDAQSYADAKKVASSIANSALFKTAMYGKDANWGRILCAVGYADADVNVLKTNVSFIPADGSAELKLLVNGEPEKVDEERASEILELEDLEIRISLGTGGGQEANFWTCDLSHEYVTINGDYRS</sequence>
<dbReference type="EC" id="2.3.1.35" evidence="1"/>
<dbReference type="EC" id="2.3.1.1" evidence="1"/>
<dbReference type="EMBL" id="FN392321">
    <property type="protein sequence ID" value="CAY70146.1"/>
    <property type="molecule type" value="Genomic_DNA"/>
</dbReference>
<dbReference type="RefSeq" id="XP_002492383.1">
    <property type="nucleotide sequence ID" value="XM_002492338.1"/>
</dbReference>
<dbReference type="SMR" id="C4R3R8"/>
<dbReference type="FunCoup" id="C4R3R8">
    <property type="interactions" value="302"/>
</dbReference>
<dbReference type="STRING" id="644223.C4R3R8"/>
<dbReference type="MEROPS" id="T05.001"/>
<dbReference type="EnsemblFungi" id="CAY70146">
    <property type="protein sequence ID" value="CAY70146"/>
    <property type="gene ID" value="PAS_chr3_0176"/>
</dbReference>
<dbReference type="GeneID" id="8199450"/>
<dbReference type="KEGG" id="ppa:PAS_chr3_0176"/>
<dbReference type="eggNOG" id="KOG2786">
    <property type="taxonomic scope" value="Eukaryota"/>
</dbReference>
<dbReference type="HOGENOM" id="CLU_027172_1_0_1"/>
<dbReference type="InParanoid" id="C4R3R8"/>
<dbReference type="OMA" id="WGRIVMA"/>
<dbReference type="OrthoDB" id="2017946at2759"/>
<dbReference type="UniPathway" id="UPA00068">
    <property type="reaction ID" value="UER00106"/>
</dbReference>
<dbReference type="UniPathway" id="UPA00068">
    <property type="reaction ID" value="UER00111"/>
</dbReference>
<dbReference type="Proteomes" id="UP000000314">
    <property type="component" value="Chromosome 3"/>
</dbReference>
<dbReference type="GO" id="GO:0005759">
    <property type="term" value="C:mitochondrial matrix"/>
    <property type="evidence" value="ECO:0007669"/>
    <property type="project" value="UniProtKB-SubCell"/>
</dbReference>
<dbReference type="GO" id="GO:0004358">
    <property type="term" value="F:glutamate N-acetyltransferase activity"/>
    <property type="evidence" value="ECO:0007669"/>
    <property type="project" value="UniProtKB-UniRule"/>
</dbReference>
<dbReference type="GO" id="GO:0004042">
    <property type="term" value="F:L-glutamate N-acetyltransferase activity"/>
    <property type="evidence" value="ECO:0007669"/>
    <property type="project" value="UniProtKB-UniRule"/>
</dbReference>
<dbReference type="GO" id="GO:0006526">
    <property type="term" value="P:L-arginine biosynthetic process"/>
    <property type="evidence" value="ECO:0007669"/>
    <property type="project" value="UniProtKB-UniRule"/>
</dbReference>
<dbReference type="GO" id="GO:0006592">
    <property type="term" value="P:ornithine biosynthetic process"/>
    <property type="evidence" value="ECO:0007669"/>
    <property type="project" value="TreeGrafter"/>
</dbReference>
<dbReference type="CDD" id="cd02152">
    <property type="entry name" value="OAT"/>
    <property type="match status" value="1"/>
</dbReference>
<dbReference type="FunFam" id="3.60.70.12:FF:000001">
    <property type="entry name" value="Arginine biosynthesis bifunctional protein ArgJ, chloroplastic"/>
    <property type="match status" value="1"/>
</dbReference>
<dbReference type="FunFam" id="3.10.20.340:FF:000002">
    <property type="entry name" value="Arginine biosynthesis bifunctional protein ArgJ, mitochondrial"/>
    <property type="match status" value="1"/>
</dbReference>
<dbReference type="FunFam" id="3.30.2330.10:FF:000001">
    <property type="entry name" value="Arginine biosynthesis bifunctional protein ArgJ, mitochondrial"/>
    <property type="match status" value="1"/>
</dbReference>
<dbReference type="Gene3D" id="3.30.2330.10">
    <property type="entry name" value="arginine biosynthesis bifunctional protein suprefamily"/>
    <property type="match status" value="1"/>
</dbReference>
<dbReference type="Gene3D" id="3.10.20.340">
    <property type="entry name" value="ArgJ beta chain, C-terminal domain"/>
    <property type="match status" value="1"/>
</dbReference>
<dbReference type="Gene3D" id="3.60.70.12">
    <property type="entry name" value="L-amino peptidase D-ALA esterase/amidase"/>
    <property type="match status" value="1"/>
</dbReference>
<dbReference type="HAMAP" id="MF_01106">
    <property type="entry name" value="ArgJ"/>
    <property type="match status" value="1"/>
</dbReference>
<dbReference type="InterPro" id="IPR002813">
    <property type="entry name" value="Arg_biosynth_ArgJ"/>
</dbReference>
<dbReference type="InterPro" id="IPR016117">
    <property type="entry name" value="ArgJ-like_dom_sf"/>
</dbReference>
<dbReference type="InterPro" id="IPR042195">
    <property type="entry name" value="ArgJ_beta_C"/>
</dbReference>
<dbReference type="NCBIfam" id="TIGR00120">
    <property type="entry name" value="ArgJ"/>
    <property type="match status" value="1"/>
</dbReference>
<dbReference type="NCBIfam" id="NF003802">
    <property type="entry name" value="PRK05388.1"/>
    <property type="match status" value="1"/>
</dbReference>
<dbReference type="PANTHER" id="PTHR23100">
    <property type="entry name" value="ARGININE BIOSYNTHESIS BIFUNCTIONAL PROTEIN ARGJ"/>
    <property type="match status" value="1"/>
</dbReference>
<dbReference type="PANTHER" id="PTHR23100:SF0">
    <property type="entry name" value="ARGININE BIOSYNTHESIS BIFUNCTIONAL PROTEIN ARGJ, MITOCHONDRIAL"/>
    <property type="match status" value="1"/>
</dbReference>
<dbReference type="Pfam" id="PF01960">
    <property type="entry name" value="ArgJ"/>
    <property type="match status" value="1"/>
</dbReference>
<dbReference type="SUPFAM" id="SSF56266">
    <property type="entry name" value="DmpA/ArgJ-like"/>
    <property type="match status" value="1"/>
</dbReference>
<accession>C4R3R8</accession>
<evidence type="ECO:0000255" key="1">
    <source>
        <dbReference type="HAMAP-Rule" id="MF_03124"/>
    </source>
</evidence>
<organism>
    <name type="scientific">Komagataella phaffii (strain GS115 / ATCC 20864)</name>
    <name type="common">Yeast</name>
    <name type="synonym">Pichia pastoris</name>
    <dbReference type="NCBI Taxonomy" id="644223"/>
    <lineage>
        <taxon>Eukaryota</taxon>
        <taxon>Fungi</taxon>
        <taxon>Dikarya</taxon>
        <taxon>Ascomycota</taxon>
        <taxon>Saccharomycotina</taxon>
        <taxon>Pichiomycetes</taxon>
        <taxon>Pichiales</taxon>
        <taxon>Pichiaceae</taxon>
        <taxon>Komagataella</taxon>
    </lineage>
</organism>
<reference key="1">
    <citation type="journal article" date="2009" name="Nat. Biotechnol.">
        <title>Genome sequence of the recombinant protein production host Pichia pastoris.</title>
        <authorList>
            <person name="De Schutter K."/>
            <person name="Lin Y.-C."/>
            <person name="Tiels P."/>
            <person name="Van Hecke A."/>
            <person name="Glinka S."/>
            <person name="Weber-Lehmann J."/>
            <person name="Rouze P."/>
            <person name="Van de Peer Y."/>
            <person name="Callewaert N."/>
        </authorList>
    </citation>
    <scope>NUCLEOTIDE SEQUENCE [LARGE SCALE GENOMIC DNA]</scope>
    <source>
        <strain>GS115 / ATCC 20864</strain>
    </source>
</reference>
<gene>
    <name type="ordered locus">PAS_chr3_0176</name>
</gene>
<feature type="chain" id="PRO_0000398086" description="Arginine biosynthesis bifunctional protein ArgJ alpha chain" evidence="1">
    <location>
        <begin position="1"/>
        <end position="207"/>
    </location>
</feature>
<feature type="chain" id="PRO_0000398087" description="Arginine biosynthesis bifunctional protein ArgJ beta chain" evidence="1">
    <location>
        <begin position="208"/>
        <end position="428"/>
    </location>
</feature>
<feature type="active site" description="Nucleophile" evidence="1">
    <location>
        <position position="208"/>
    </location>
</feature>
<feature type="binding site" evidence="1">
    <location>
        <position position="171"/>
    </location>
    <ligand>
        <name>substrate</name>
    </ligand>
</feature>
<feature type="binding site" evidence="1">
    <location>
        <position position="197"/>
    </location>
    <ligand>
        <name>substrate</name>
    </ligand>
</feature>
<feature type="binding site" evidence="1">
    <location>
        <position position="208"/>
    </location>
    <ligand>
        <name>substrate</name>
    </ligand>
</feature>
<feature type="binding site" evidence="1">
    <location>
        <position position="294"/>
    </location>
    <ligand>
        <name>substrate</name>
    </ligand>
</feature>
<feature type="binding site" evidence="1">
    <location>
        <position position="423"/>
    </location>
    <ligand>
        <name>substrate</name>
    </ligand>
</feature>
<feature type="binding site" evidence="1">
    <location>
        <position position="428"/>
    </location>
    <ligand>
        <name>substrate</name>
    </ligand>
</feature>
<feature type="site" description="Involved in the stabilization of negative charge on the oxyanion by the formation of the oxyanion hole" evidence="1">
    <location>
        <position position="132"/>
    </location>
</feature>
<feature type="site" description="Involved in the stabilization of negative charge on the oxyanion by the formation of the oxyanion hole" evidence="1">
    <location>
        <position position="133"/>
    </location>
</feature>
<feature type="site" description="Cleavage; by autolysis" evidence="1">
    <location>
        <begin position="207"/>
        <end position="208"/>
    </location>
</feature>
<name>ARGJ_KOMPG</name>